<comment type="function">
    <text evidence="3">Receptor for lysophosphatidic acid (LPA), a mediator of diverse cellular activities. Transduces a signal by increasing the intracellular calcium ions and by stimulating adenylyl cyclase activity. The rank order of potency for agonists of this receptor is 1-oleoyl- &gt; 1-stearoyl- &gt; 1-palmitoyl- &gt; 1-myristoyl- &gt; 1-alkyl- &gt; 1-alkenyl-LPA.</text>
</comment>
<comment type="subcellular location">
    <subcellularLocation>
        <location>Cell membrane</location>
        <topology>Multi-pass membrane protein</topology>
    </subcellularLocation>
</comment>
<comment type="tissue specificity">
    <text evidence="3">High expression in ovary. Not detected in the brain regions thalamus, putamen, caudate, frontal cortex, pons, hypothalamus and hippocampus.</text>
</comment>
<comment type="similarity">
    <text evidence="2">Belongs to the G-protein coupled receptor 1 family.</text>
</comment>
<protein>
    <recommendedName>
        <fullName>Lysophosphatidic acid receptor 4</fullName>
        <shortName>LPA receptor 4</shortName>
        <shortName>LPA-4</shortName>
    </recommendedName>
    <alternativeName>
        <fullName>G-protein coupled receptor 23</fullName>
    </alternativeName>
    <alternativeName>
        <fullName>P2Y purinoceptor 9</fullName>
        <shortName>P2Y9</shortName>
    </alternativeName>
    <alternativeName>
        <fullName>P2Y5-like receptor</fullName>
    </alternativeName>
    <alternativeName>
        <fullName>Purinergic receptor 9</fullName>
    </alternativeName>
</protein>
<proteinExistence type="evidence at protein level"/>
<keyword id="KW-1003">Cell membrane</keyword>
<keyword id="KW-1015">Disulfide bond</keyword>
<keyword id="KW-0297">G-protein coupled receptor</keyword>
<keyword id="KW-0325">Glycoprotein</keyword>
<keyword id="KW-0446">Lipid-binding</keyword>
<keyword id="KW-0472">Membrane</keyword>
<keyword id="KW-0675">Receptor</keyword>
<keyword id="KW-1185">Reference proteome</keyword>
<keyword id="KW-0807">Transducer</keyword>
<keyword id="KW-0812">Transmembrane</keyword>
<keyword id="KW-1133">Transmembrane helix</keyword>
<reference key="1">
    <citation type="journal article" date="1997" name="Gene">
        <title>Cloning and chromosomal mapping of four putative novel human G-protein-coupled receptor genes.</title>
        <authorList>
            <person name="O'Dowd B.F."/>
            <person name="Nguyen T."/>
            <person name="Jung B.P."/>
            <person name="Marchese A."/>
            <person name="Cheng R."/>
            <person name="Heng H.H.Q."/>
            <person name="Kolakowski L.F. Jr."/>
            <person name="Lynch K.R."/>
            <person name="George S.R."/>
        </authorList>
    </citation>
    <scope>NUCLEOTIDE SEQUENCE [GENOMIC DNA]</scope>
</reference>
<reference key="2">
    <citation type="submission" date="1997-07" db="EMBL/GenBank/DDBJ databases">
        <title>Cloning, characterization and chromosomal localization of a novel human purinergic receptor (P2Y9).</title>
        <authorList>
            <person name="Bohm S.K."/>
            <person name="Khitin L.M."/>
            <person name="Payan D.P."/>
            <person name="Bunnett N.W."/>
        </authorList>
    </citation>
    <scope>NUCLEOTIDE SEQUENCE [GENOMIC DNA / MRNA]</scope>
</reference>
<reference key="3">
    <citation type="journal article" date="1997" name="Biochem. Biophys. Res. Commun.">
        <title>Cloning of a human heptahelical receptor closely related to the P2Y5 receptor.</title>
        <authorList>
            <person name="Janssens R."/>
            <person name="Boeynaems J.-M."/>
            <person name="Godart M."/>
            <person name="Communi D."/>
        </authorList>
    </citation>
    <scope>NUCLEOTIDE SEQUENCE [GENOMIC DNA]</scope>
</reference>
<reference key="4">
    <citation type="submission" date="2003-05" db="EMBL/GenBank/DDBJ databases">
        <title>cDNA clones of human proteins involved in signal transduction sequenced by the Guthrie cDNA resource center (www.cdna.org).</title>
        <authorList>
            <person name="Kopatz S.A."/>
            <person name="Aronstam R.S."/>
            <person name="Sharma S.V."/>
        </authorList>
    </citation>
    <scope>NUCLEOTIDE SEQUENCE [LARGE SCALE MRNA]</scope>
</reference>
<reference key="5">
    <citation type="journal article" date="2004" name="Nat. Genet.">
        <title>Complete sequencing and characterization of 21,243 full-length human cDNAs.</title>
        <authorList>
            <person name="Ota T."/>
            <person name="Suzuki Y."/>
            <person name="Nishikawa T."/>
            <person name="Otsuki T."/>
            <person name="Sugiyama T."/>
            <person name="Irie R."/>
            <person name="Wakamatsu A."/>
            <person name="Hayashi K."/>
            <person name="Sato H."/>
            <person name="Nagai K."/>
            <person name="Kimura K."/>
            <person name="Makita H."/>
            <person name="Sekine M."/>
            <person name="Obayashi M."/>
            <person name="Nishi T."/>
            <person name="Shibahara T."/>
            <person name="Tanaka T."/>
            <person name="Ishii S."/>
            <person name="Yamamoto J."/>
            <person name="Saito K."/>
            <person name="Kawai Y."/>
            <person name="Isono Y."/>
            <person name="Nakamura Y."/>
            <person name="Nagahari K."/>
            <person name="Murakami K."/>
            <person name="Yasuda T."/>
            <person name="Iwayanagi T."/>
            <person name="Wagatsuma M."/>
            <person name="Shiratori A."/>
            <person name="Sudo H."/>
            <person name="Hosoiri T."/>
            <person name="Kaku Y."/>
            <person name="Kodaira H."/>
            <person name="Kondo H."/>
            <person name="Sugawara M."/>
            <person name="Takahashi M."/>
            <person name="Kanda K."/>
            <person name="Yokoi T."/>
            <person name="Furuya T."/>
            <person name="Kikkawa E."/>
            <person name="Omura Y."/>
            <person name="Abe K."/>
            <person name="Kamihara K."/>
            <person name="Katsuta N."/>
            <person name="Sato K."/>
            <person name="Tanikawa M."/>
            <person name="Yamazaki M."/>
            <person name="Ninomiya K."/>
            <person name="Ishibashi T."/>
            <person name="Yamashita H."/>
            <person name="Murakawa K."/>
            <person name="Fujimori K."/>
            <person name="Tanai H."/>
            <person name="Kimata M."/>
            <person name="Watanabe M."/>
            <person name="Hiraoka S."/>
            <person name="Chiba Y."/>
            <person name="Ishida S."/>
            <person name="Ono Y."/>
            <person name="Takiguchi S."/>
            <person name="Watanabe S."/>
            <person name="Yosida M."/>
            <person name="Hotuta T."/>
            <person name="Kusano J."/>
            <person name="Kanehori K."/>
            <person name="Takahashi-Fujii A."/>
            <person name="Hara H."/>
            <person name="Tanase T.-O."/>
            <person name="Nomura Y."/>
            <person name="Togiya S."/>
            <person name="Komai F."/>
            <person name="Hara R."/>
            <person name="Takeuchi K."/>
            <person name="Arita M."/>
            <person name="Imose N."/>
            <person name="Musashino K."/>
            <person name="Yuuki H."/>
            <person name="Oshima A."/>
            <person name="Sasaki N."/>
            <person name="Aotsuka S."/>
            <person name="Yoshikawa Y."/>
            <person name="Matsunawa H."/>
            <person name="Ichihara T."/>
            <person name="Shiohata N."/>
            <person name="Sano S."/>
            <person name="Moriya S."/>
            <person name="Momiyama H."/>
            <person name="Satoh N."/>
            <person name="Takami S."/>
            <person name="Terashima Y."/>
            <person name="Suzuki O."/>
            <person name="Nakagawa S."/>
            <person name="Senoh A."/>
            <person name="Mizoguchi H."/>
            <person name="Goto Y."/>
            <person name="Shimizu F."/>
            <person name="Wakebe H."/>
            <person name="Hishigaki H."/>
            <person name="Watanabe T."/>
            <person name="Sugiyama A."/>
            <person name="Takemoto M."/>
            <person name="Kawakami B."/>
            <person name="Yamazaki M."/>
            <person name="Watanabe K."/>
            <person name="Kumagai A."/>
            <person name="Itakura S."/>
            <person name="Fukuzumi Y."/>
            <person name="Fujimori Y."/>
            <person name="Komiyama M."/>
            <person name="Tashiro H."/>
            <person name="Tanigami A."/>
            <person name="Fujiwara T."/>
            <person name="Ono T."/>
            <person name="Yamada K."/>
            <person name="Fujii Y."/>
            <person name="Ozaki K."/>
            <person name="Hirao M."/>
            <person name="Ohmori Y."/>
            <person name="Kawabata A."/>
            <person name="Hikiji T."/>
            <person name="Kobatake N."/>
            <person name="Inagaki H."/>
            <person name="Ikema Y."/>
            <person name="Okamoto S."/>
            <person name="Okitani R."/>
            <person name="Kawakami T."/>
            <person name="Noguchi S."/>
            <person name="Itoh T."/>
            <person name="Shigeta K."/>
            <person name="Senba T."/>
            <person name="Matsumura K."/>
            <person name="Nakajima Y."/>
            <person name="Mizuno T."/>
            <person name="Morinaga M."/>
            <person name="Sasaki M."/>
            <person name="Togashi T."/>
            <person name="Oyama M."/>
            <person name="Hata H."/>
            <person name="Watanabe M."/>
            <person name="Komatsu T."/>
            <person name="Mizushima-Sugano J."/>
            <person name="Satoh T."/>
            <person name="Shirai Y."/>
            <person name="Takahashi Y."/>
            <person name="Nakagawa K."/>
            <person name="Okumura K."/>
            <person name="Nagase T."/>
            <person name="Nomura N."/>
            <person name="Kikuchi H."/>
            <person name="Masuho Y."/>
            <person name="Yamashita R."/>
            <person name="Nakai K."/>
            <person name="Yada T."/>
            <person name="Nakamura Y."/>
            <person name="Ohara O."/>
            <person name="Isogai T."/>
            <person name="Sugano S."/>
        </authorList>
    </citation>
    <scope>NUCLEOTIDE SEQUENCE [LARGE SCALE MRNA]</scope>
    <source>
        <tissue>Thalamus</tissue>
    </source>
</reference>
<reference key="6">
    <citation type="journal article" date="2005" name="Nature">
        <title>The DNA sequence of the human X chromosome.</title>
        <authorList>
            <person name="Ross M.T."/>
            <person name="Grafham D.V."/>
            <person name="Coffey A.J."/>
            <person name="Scherer S."/>
            <person name="McLay K."/>
            <person name="Muzny D."/>
            <person name="Platzer M."/>
            <person name="Howell G.R."/>
            <person name="Burrows C."/>
            <person name="Bird C.P."/>
            <person name="Frankish A."/>
            <person name="Lovell F.L."/>
            <person name="Howe K.L."/>
            <person name="Ashurst J.L."/>
            <person name="Fulton R.S."/>
            <person name="Sudbrak R."/>
            <person name="Wen G."/>
            <person name="Jones M.C."/>
            <person name="Hurles M.E."/>
            <person name="Andrews T.D."/>
            <person name="Scott C.E."/>
            <person name="Searle S."/>
            <person name="Ramser J."/>
            <person name="Whittaker A."/>
            <person name="Deadman R."/>
            <person name="Carter N.P."/>
            <person name="Hunt S.E."/>
            <person name="Chen R."/>
            <person name="Cree A."/>
            <person name="Gunaratne P."/>
            <person name="Havlak P."/>
            <person name="Hodgson A."/>
            <person name="Metzker M.L."/>
            <person name="Richards S."/>
            <person name="Scott G."/>
            <person name="Steffen D."/>
            <person name="Sodergren E."/>
            <person name="Wheeler D.A."/>
            <person name="Worley K.C."/>
            <person name="Ainscough R."/>
            <person name="Ambrose K.D."/>
            <person name="Ansari-Lari M.A."/>
            <person name="Aradhya S."/>
            <person name="Ashwell R.I."/>
            <person name="Babbage A.K."/>
            <person name="Bagguley C.L."/>
            <person name="Ballabio A."/>
            <person name="Banerjee R."/>
            <person name="Barker G.E."/>
            <person name="Barlow K.F."/>
            <person name="Barrett I.P."/>
            <person name="Bates K.N."/>
            <person name="Beare D.M."/>
            <person name="Beasley H."/>
            <person name="Beasley O."/>
            <person name="Beck A."/>
            <person name="Bethel G."/>
            <person name="Blechschmidt K."/>
            <person name="Brady N."/>
            <person name="Bray-Allen S."/>
            <person name="Bridgeman A.M."/>
            <person name="Brown A.J."/>
            <person name="Brown M.J."/>
            <person name="Bonnin D."/>
            <person name="Bruford E.A."/>
            <person name="Buhay C."/>
            <person name="Burch P."/>
            <person name="Burford D."/>
            <person name="Burgess J."/>
            <person name="Burrill W."/>
            <person name="Burton J."/>
            <person name="Bye J.M."/>
            <person name="Carder C."/>
            <person name="Carrel L."/>
            <person name="Chako J."/>
            <person name="Chapman J.C."/>
            <person name="Chavez D."/>
            <person name="Chen E."/>
            <person name="Chen G."/>
            <person name="Chen Y."/>
            <person name="Chen Z."/>
            <person name="Chinault C."/>
            <person name="Ciccodicola A."/>
            <person name="Clark S.Y."/>
            <person name="Clarke G."/>
            <person name="Clee C.M."/>
            <person name="Clegg S."/>
            <person name="Clerc-Blankenburg K."/>
            <person name="Clifford K."/>
            <person name="Cobley V."/>
            <person name="Cole C.G."/>
            <person name="Conquer J.S."/>
            <person name="Corby N."/>
            <person name="Connor R.E."/>
            <person name="David R."/>
            <person name="Davies J."/>
            <person name="Davis C."/>
            <person name="Davis J."/>
            <person name="Delgado O."/>
            <person name="Deshazo D."/>
            <person name="Dhami P."/>
            <person name="Ding Y."/>
            <person name="Dinh H."/>
            <person name="Dodsworth S."/>
            <person name="Draper H."/>
            <person name="Dugan-Rocha S."/>
            <person name="Dunham A."/>
            <person name="Dunn M."/>
            <person name="Durbin K.J."/>
            <person name="Dutta I."/>
            <person name="Eades T."/>
            <person name="Ellwood M."/>
            <person name="Emery-Cohen A."/>
            <person name="Errington H."/>
            <person name="Evans K.L."/>
            <person name="Faulkner L."/>
            <person name="Francis F."/>
            <person name="Frankland J."/>
            <person name="Fraser A.E."/>
            <person name="Galgoczy P."/>
            <person name="Gilbert J."/>
            <person name="Gill R."/>
            <person name="Gloeckner G."/>
            <person name="Gregory S.G."/>
            <person name="Gribble S."/>
            <person name="Griffiths C."/>
            <person name="Grocock R."/>
            <person name="Gu Y."/>
            <person name="Gwilliam R."/>
            <person name="Hamilton C."/>
            <person name="Hart E.A."/>
            <person name="Hawes A."/>
            <person name="Heath P.D."/>
            <person name="Heitmann K."/>
            <person name="Hennig S."/>
            <person name="Hernandez J."/>
            <person name="Hinzmann B."/>
            <person name="Ho S."/>
            <person name="Hoffs M."/>
            <person name="Howden P.J."/>
            <person name="Huckle E.J."/>
            <person name="Hume J."/>
            <person name="Hunt P.J."/>
            <person name="Hunt A.R."/>
            <person name="Isherwood J."/>
            <person name="Jacob L."/>
            <person name="Johnson D."/>
            <person name="Jones S."/>
            <person name="de Jong P.J."/>
            <person name="Joseph S.S."/>
            <person name="Keenan S."/>
            <person name="Kelly S."/>
            <person name="Kershaw J.K."/>
            <person name="Khan Z."/>
            <person name="Kioschis P."/>
            <person name="Klages S."/>
            <person name="Knights A.J."/>
            <person name="Kosiura A."/>
            <person name="Kovar-Smith C."/>
            <person name="Laird G.K."/>
            <person name="Langford C."/>
            <person name="Lawlor S."/>
            <person name="Leversha M."/>
            <person name="Lewis L."/>
            <person name="Liu W."/>
            <person name="Lloyd C."/>
            <person name="Lloyd D.M."/>
            <person name="Loulseged H."/>
            <person name="Loveland J.E."/>
            <person name="Lovell J.D."/>
            <person name="Lozado R."/>
            <person name="Lu J."/>
            <person name="Lyne R."/>
            <person name="Ma J."/>
            <person name="Maheshwari M."/>
            <person name="Matthews L.H."/>
            <person name="McDowall J."/>
            <person name="McLaren S."/>
            <person name="McMurray A."/>
            <person name="Meidl P."/>
            <person name="Meitinger T."/>
            <person name="Milne S."/>
            <person name="Miner G."/>
            <person name="Mistry S.L."/>
            <person name="Morgan M."/>
            <person name="Morris S."/>
            <person name="Mueller I."/>
            <person name="Mullikin J.C."/>
            <person name="Nguyen N."/>
            <person name="Nordsiek G."/>
            <person name="Nyakatura G."/>
            <person name="O'dell C.N."/>
            <person name="Okwuonu G."/>
            <person name="Palmer S."/>
            <person name="Pandian R."/>
            <person name="Parker D."/>
            <person name="Parrish J."/>
            <person name="Pasternak S."/>
            <person name="Patel D."/>
            <person name="Pearce A.V."/>
            <person name="Pearson D.M."/>
            <person name="Pelan S.E."/>
            <person name="Perez L."/>
            <person name="Porter K.M."/>
            <person name="Ramsey Y."/>
            <person name="Reichwald K."/>
            <person name="Rhodes S."/>
            <person name="Ridler K.A."/>
            <person name="Schlessinger D."/>
            <person name="Schueler M.G."/>
            <person name="Sehra H.K."/>
            <person name="Shaw-Smith C."/>
            <person name="Shen H."/>
            <person name="Sheridan E.M."/>
            <person name="Shownkeen R."/>
            <person name="Skuce C.D."/>
            <person name="Smith M.L."/>
            <person name="Sotheran E.C."/>
            <person name="Steingruber H.E."/>
            <person name="Steward C.A."/>
            <person name="Storey R."/>
            <person name="Swann R.M."/>
            <person name="Swarbreck D."/>
            <person name="Tabor P.E."/>
            <person name="Taudien S."/>
            <person name="Taylor T."/>
            <person name="Teague B."/>
            <person name="Thomas K."/>
            <person name="Thorpe A."/>
            <person name="Timms K."/>
            <person name="Tracey A."/>
            <person name="Trevanion S."/>
            <person name="Tromans A.C."/>
            <person name="d'Urso M."/>
            <person name="Verduzco D."/>
            <person name="Villasana D."/>
            <person name="Waldron L."/>
            <person name="Wall M."/>
            <person name="Wang Q."/>
            <person name="Warren J."/>
            <person name="Warry G.L."/>
            <person name="Wei X."/>
            <person name="West A."/>
            <person name="Whitehead S.L."/>
            <person name="Whiteley M.N."/>
            <person name="Wilkinson J.E."/>
            <person name="Willey D.L."/>
            <person name="Williams G."/>
            <person name="Williams L."/>
            <person name="Williamson A."/>
            <person name="Williamson H."/>
            <person name="Wilming L."/>
            <person name="Woodmansey R.L."/>
            <person name="Wray P.W."/>
            <person name="Yen J."/>
            <person name="Zhang J."/>
            <person name="Zhou J."/>
            <person name="Zoghbi H."/>
            <person name="Zorilla S."/>
            <person name="Buck D."/>
            <person name="Reinhardt R."/>
            <person name="Poustka A."/>
            <person name="Rosenthal A."/>
            <person name="Lehrach H."/>
            <person name="Meindl A."/>
            <person name="Minx P.J."/>
            <person name="Hillier L.W."/>
            <person name="Willard H.F."/>
            <person name="Wilson R.K."/>
            <person name="Waterston R.H."/>
            <person name="Rice C.M."/>
            <person name="Vaudin M."/>
            <person name="Coulson A."/>
            <person name="Nelson D.L."/>
            <person name="Weinstock G."/>
            <person name="Sulston J.E."/>
            <person name="Durbin R.M."/>
            <person name="Hubbard T."/>
            <person name="Gibbs R.A."/>
            <person name="Beck S."/>
            <person name="Rogers J."/>
            <person name="Bentley D.R."/>
        </authorList>
    </citation>
    <scope>NUCLEOTIDE SEQUENCE [LARGE SCALE GENOMIC DNA]</scope>
</reference>
<reference key="7">
    <citation type="submission" date="2005-09" db="EMBL/GenBank/DDBJ databases">
        <authorList>
            <person name="Mural R.J."/>
            <person name="Istrail S."/>
            <person name="Sutton G.G."/>
            <person name="Florea L."/>
            <person name="Halpern A.L."/>
            <person name="Mobarry C.M."/>
            <person name="Lippert R."/>
            <person name="Walenz B."/>
            <person name="Shatkay H."/>
            <person name="Dew I."/>
            <person name="Miller J.R."/>
            <person name="Flanigan M.J."/>
            <person name="Edwards N.J."/>
            <person name="Bolanos R."/>
            <person name="Fasulo D."/>
            <person name="Halldorsson B.V."/>
            <person name="Hannenhalli S."/>
            <person name="Turner R."/>
            <person name="Yooseph S."/>
            <person name="Lu F."/>
            <person name="Nusskern D.R."/>
            <person name="Shue B.C."/>
            <person name="Zheng X.H."/>
            <person name="Zhong F."/>
            <person name="Delcher A.L."/>
            <person name="Huson D.H."/>
            <person name="Kravitz S.A."/>
            <person name="Mouchard L."/>
            <person name="Reinert K."/>
            <person name="Remington K.A."/>
            <person name="Clark A.G."/>
            <person name="Waterman M.S."/>
            <person name="Eichler E.E."/>
            <person name="Adams M.D."/>
            <person name="Hunkapiller M.W."/>
            <person name="Myers E.W."/>
            <person name="Venter J.C."/>
        </authorList>
    </citation>
    <scope>NUCLEOTIDE SEQUENCE [LARGE SCALE GENOMIC DNA]</scope>
</reference>
<reference key="8">
    <citation type="journal article" date="2004" name="Genome Res.">
        <title>The status, quality, and expansion of the NIH full-length cDNA project: the Mammalian Gene Collection (MGC).</title>
        <authorList>
            <consortium name="The MGC Project Team"/>
        </authorList>
    </citation>
    <scope>NUCLEOTIDE SEQUENCE [LARGE SCALE MRNA]</scope>
    <source>
        <tissue>Brain</tissue>
    </source>
</reference>
<reference key="9">
    <citation type="journal article" date="2003" name="J. Biol. Chem.">
        <title>Identification of p2y9/GPR23 as a novel G protein-coupled receptor for lysophosphatidic acid, structurally distant from the Edg family.</title>
        <authorList>
            <person name="Noguchi K."/>
            <person name="Ishii S."/>
            <person name="Shimizu T."/>
        </authorList>
    </citation>
    <scope>FUNCTION</scope>
    <scope>TISSUE SPECIFICITY</scope>
</reference>
<reference key="10">
    <citation type="journal article" date="2005" name="J. Proteome Res.">
        <title>Human plasma N-glycoproteome analysis by immunoaffinity subtraction, hydrazide chemistry, and mass spectrometry.</title>
        <authorList>
            <person name="Liu T."/>
            <person name="Qian W.-J."/>
            <person name="Gritsenko M.A."/>
            <person name="Camp D.G. II"/>
            <person name="Monroe M.E."/>
            <person name="Moore R.J."/>
            <person name="Smith R.D."/>
        </authorList>
    </citation>
    <scope>GLYCOSYLATION [LARGE SCALE ANALYSIS] AT ASN-183</scope>
    <source>
        <tissue>Plasma</tissue>
    </source>
</reference>
<evidence type="ECO:0000255" key="1"/>
<evidence type="ECO:0000255" key="2">
    <source>
        <dbReference type="PROSITE-ProRule" id="PRU00521"/>
    </source>
</evidence>
<evidence type="ECO:0000269" key="3">
    <source>
    </source>
</evidence>
<evidence type="ECO:0000269" key="4">
    <source>
    </source>
</evidence>
<evidence type="ECO:0000305" key="5"/>
<name>LPAR4_HUMAN</name>
<accession>Q99677</accession>
<accession>B2RAC7</accession>
<accession>O15132</accession>
<accession>Q502U9</accession>
<accession>Q6NSP5</accession>
<dbReference type="EMBL" id="U66578">
    <property type="protein sequence ID" value="AAC51301.1"/>
    <property type="molecule type" value="Genomic_DNA"/>
</dbReference>
<dbReference type="EMBL" id="U90323">
    <property type="protein sequence ID" value="AAB62087.1"/>
    <property type="molecule type" value="Genomic_DNA"/>
</dbReference>
<dbReference type="EMBL" id="U90322">
    <property type="protein sequence ID" value="AAB62088.1"/>
    <property type="molecule type" value="mRNA"/>
</dbReference>
<dbReference type="EMBL" id="AF005419">
    <property type="protein sequence ID" value="AAB66322.1"/>
    <property type="molecule type" value="Genomic_DNA"/>
</dbReference>
<dbReference type="EMBL" id="AY301274">
    <property type="protein sequence ID" value="AAP58404.1"/>
    <property type="molecule type" value="Genomic_DNA"/>
</dbReference>
<dbReference type="EMBL" id="AK314134">
    <property type="protein sequence ID" value="BAG36824.1"/>
    <property type="molecule type" value="mRNA"/>
</dbReference>
<dbReference type="EMBL" id="AL590083">
    <property type="status" value="NOT_ANNOTATED_CDS"/>
    <property type="molecule type" value="Genomic_DNA"/>
</dbReference>
<dbReference type="EMBL" id="CH471104">
    <property type="protein sequence ID" value="EAW98596.1"/>
    <property type="molecule type" value="Genomic_DNA"/>
</dbReference>
<dbReference type="EMBL" id="BC069996">
    <property type="protein sequence ID" value="AAH69996.1"/>
    <property type="molecule type" value="mRNA"/>
</dbReference>
<dbReference type="EMBL" id="BC074722">
    <property type="protein sequence ID" value="AAH74722.1"/>
    <property type="molecule type" value="mRNA"/>
</dbReference>
<dbReference type="EMBL" id="BC095538">
    <property type="protein sequence ID" value="AAH95538.1"/>
    <property type="molecule type" value="mRNA"/>
</dbReference>
<dbReference type="CCDS" id="CCDS14441.1"/>
<dbReference type="PIR" id="JC5549">
    <property type="entry name" value="JC5549"/>
</dbReference>
<dbReference type="RefSeq" id="NP_001264929.1">
    <property type="nucleotide sequence ID" value="NM_001278000.3"/>
</dbReference>
<dbReference type="RefSeq" id="NP_005287.1">
    <property type="nucleotide sequence ID" value="NM_005296.3"/>
</dbReference>
<dbReference type="RefSeq" id="XP_005262183.1">
    <property type="nucleotide sequence ID" value="XM_005262126.3"/>
</dbReference>
<dbReference type="RefSeq" id="XP_006724702.1">
    <property type="nucleotide sequence ID" value="XM_006724639.4"/>
</dbReference>
<dbReference type="RefSeq" id="XP_016884926.1">
    <property type="nucleotide sequence ID" value="XM_017029437.2"/>
</dbReference>
<dbReference type="RefSeq" id="XP_016884927.1">
    <property type="nucleotide sequence ID" value="XM_017029438.2"/>
</dbReference>
<dbReference type="RefSeq" id="XP_047297967.1">
    <property type="nucleotide sequence ID" value="XM_047442011.1"/>
</dbReference>
<dbReference type="RefSeq" id="XP_047297968.1">
    <property type="nucleotide sequence ID" value="XM_047442012.1"/>
</dbReference>
<dbReference type="RefSeq" id="XP_047297969.1">
    <property type="nucleotide sequence ID" value="XM_047442013.1"/>
</dbReference>
<dbReference type="RefSeq" id="XP_047297970.1">
    <property type="nucleotide sequence ID" value="XM_047442014.1"/>
</dbReference>
<dbReference type="RefSeq" id="XP_047297971.1">
    <property type="nucleotide sequence ID" value="XM_047442015.1"/>
</dbReference>
<dbReference type="RefSeq" id="XP_054182851.1">
    <property type="nucleotide sequence ID" value="XM_054326876.1"/>
</dbReference>
<dbReference type="RefSeq" id="XP_054182852.1">
    <property type="nucleotide sequence ID" value="XM_054326877.1"/>
</dbReference>
<dbReference type="RefSeq" id="XP_054182853.1">
    <property type="nucleotide sequence ID" value="XM_054326878.1"/>
</dbReference>
<dbReference type="RefSeq" id="XP_054182854.1">
    <property type="nucleotide sequence ID" value="XM_054326879.1"/>
</dbReference>
<dbReference type="RefSeq" id="XP_054182855.1">
    <property type="nucleotide sequence ID" value="XM_054326880.1"/>
</dbReference>
<dbReference type="RefSeq" id="XP_054182856.1">
    <property type="nucleotide sequence ID" value="XM_054326881.1"/>
</dbReference>
<dbReference type="RefSeq" id="XP_054182857.1">
    <property type="nucleotide sequence ID" value="XM_054326882.1"/>
</dbReference>
<dbReference type="RefSeq" id="XP_054182858.1">
    <property type="nucleotide sequence ID" value="XM_054326883.1"/>
</dbReference>
<dbReference type="SMR" id="Q99677"/>
<dbReference type="BioGRID" id="109105">
    <property type="interactions" value="85"/>
</dbReference>
<dbReference type="FunCoup" id="Q99677">
    <property type="interactions" value="1093"/>
</dbReference>
<dbReference type="IntAct" id="Q99677">
    <property type="interactions" value="34"/>
</dbReference>
<dbReference type="STRING" id="9606.ENSP00000408205"/>
<dbReference type="BindingDB" id="Q99677"/>
<dbReference type="ChEMBL" id="CHEMBL5968"/>
<dbReference type="DrugBank" id="DB01069">
    <property type="generic name" value="Promethazine"/>
</dbReference>
<dbReference type="GuidetoPHARMACOLOGY" id="94"/>
<dbReference type="SwissLipids" id="SLP:000001577"/>
<dbReference type="TCDB" id="9.A.14.13.9">
    <property type="family name" value="the g-protein-coupled receptor (gpcr) family"/>
</dbReference>
<dbReference type="GlyCosmos" id="Q99677">
    <property type="glycosylation" value="4 sites, No reported glycans"/>
</dbReference>
<dbReference type="GlyGen" id="Q99677">
    <property type="glycosylation" value="4 sites"/>
</dbReference>
<dbReference type="iPTMnet" id="Q99677"/>
<dbReference type="PhosphoSitePlus" id="Q99677"/>
<dbReference type="BioMuta" id="LPAR4"/>
<dbReference type="DMDM" id="2495042"/>
<dbReference type="PaxDb" id="9606-ENSP00000408205"/>
<dbReference type="PeptideAtlas" id="Q99677"/>
<dbReference type="Antibodypedia" id="35263">
    <property type="antibodies" value="308 antibodies from 30 providers"/>
</dbReference>
<dbReference type="DNASU" id="2846"/>
<dbReference type="Ensembl" id="ENST00000435339.3">
    <property type="protein sequence ID" value="ENSP00000408205.2"/>
    <property type="gene ID" value="ENSG00000147145.14"/>
</dbReference>
<dbReference type="Ensembl" id="ENST00000614823.5">
    <property type="protein sequence ID" value="ENSP00000478261.1"/>
    <property type="gene ID" value="ENSG00000147145.14"/>
</dbReference>
<dbReference type="GeneID" id="2846"/>
<dbReference type="KEGG" id="hsa:2846"/>
<dbReference type="MANE-Select" id="ENST00000614823.5">
    <property type="protein sequence ID" value="ENSP00000478261.1"/>
    <property type="RefSeq nucleotide sequence ID" value="NM_001278000.3"/>
    <property type="RefSeq protein sequence ID" value="NP_001264929.1"/>
</dbReference>
<dbReference type="UCSC" id="uc010nme.4">
    <property type="organism name" value="human"/>
</dbReference>
<dbReference type="AGR" id="HGNC:4478"/>
<dbReference type="CTD" id="2846"/>
<dbReference type="DisGeNET" id="2846"/>
<dbReference type="GeneCards" id="LPAR4"/>
<dbReference type="HGNC" id="HGNC:4478">
    <property type="gene designation" value="LPAR4"/>
</dbReference>
<dbReference type="HPA" id="ENSG00000147145">
    <property type="expression patterns" value="Tissue enhanced (ovary)"/>
</dbReference>
<dbReference type="MalaCards" id="LPAR4"/>
<dbReference type="MIM" id="300086">
    <property type="type" value="gene"/>
</dbReference>
<dbReference type="neXtProt" id="NX_Q99677"/>
<dbReference type="OpenTargets" id="ENSG00000147145"/>
<dbReference type="Orphanet" id="146">
    <property type="disease" value="Differentiated thyroid carcinoma"/>
</dbReference>
<dbReference type="PharmGKB" id="PA162394222"/>
<dbReference type="VEuPathDB" id="HostDB:ENSG00000147145"/>
<dbReference type="eggNOG" id="ENOG502QV8W">
    <property type="taxonomic scope" value="Eukaryota"/>
</dbReference>
<dbReference type="GeneTree" id="ENSGT01040000240444"/>
<dbReference type="HOGENOM" id="CLU_009579_8_2_1"/>
<dbReference type="InParanoid" id="Q99677"/>
<dbReference type="OMA" id="TINSRHR"/>
<dbReference type="OrthoDB" id="5781782at2759"/>
<dbReference type="PAN-GO" id="Q99677">
    <property type="GO annotations" value="4 GO annotations based on evolutionary models"/>
</dbReference>
<dbReference type="PhylomeDB" id="Q99677"/>
<dbReference type="TreeFam" id="TF350009"/>
<dbReference type="PathwayCommons" id="Q99677"/>
<dbReference type="Reactome" id="R-HSA-416476">
    <property type="pathway name" value="G alpha (q) signalling events"/>
</dbReference>
<dbReference type="Reactome" id="R-HSA-417957">
    <property type="pathway name" value="P2Y receptors"/>
</dbReference>
<dbReference type="SignaLink" id="Q99677"/>
<dbReference type="SIGNOR" id="Q99677"/>
<dbReference type="BioGRID-ORCS" id="2846">
    <property type="hits" value="8 hits in 766 CRISPR screens"/>
</dbReference>
<dbReference type="GeneWiki" id="LPAR4"/>
<dbReference type="GenomeRNAi" id="2846"/>
<dbReference type="Pharos" id="Q99677">
    <property type="development level" value="Tchem"/>
</dbReference>
<dbReference type="PRO" id="PR:Q99677"/>
<dbReference type="Proteomes" id="UP000005640">
    <property type="component" value="Chromosome X"/>
</dbReference>
<dbReference type="RNAct" id="Q99677">
    <property type="molecule type" value="protein"/>
</dbReference>
<dbReference type="Bgee" id="ENSG00000147145">
    <property type="expression patterns" value="Expressed in sural nerve and 113 other cell types or tissues"/>
</dbReference>
<dbReference type="ExpressionAtlas" id="Q99677">
    <property type="expression patterns" value="baseline and differential"/>
</dbReference>
<dbReference type="GO" id="GO:0043231">
    <property type="term" value="C:intracellular membrane-bounded organelle"/>
    <property type="evidence" value="ECO:0000314"/>
    <property type="project" value="HPA"/>
</dbReference>
<dbReference type="GO" id="GO:0016604">
    <property type="term" value="C:nuclear body"/>
    <property type="evidence" value="ECO:0000314"/>
    <property type="project" value="HPA"/>
</dbReference>
<dbReference type="GO" id="GO:0005886">
    <property type="term" value="C:plasma membrane"/>
    <property type="evidence" value="ECO:0000314"/>
    <property type="project" value="HPA"/>
</dbReference>
<dbReference type="GO" id="GO:0035727">
    <property type="term" value="F:lysophosphatidic acid binding"/>
    <property type="evidence" value="ECO:0007669"/>
    <property type="project" value="Ensembl"/>
</dbReference>
<dbReference type="GO" id="GO:0070915">
    <property type="term" value="F:lysophosphatidic acid receptor activity"/>
    <property type="evidence" value="ECO:0000318"/>
    <property type="project" value="GO_Central"/>
</dbReference>
<dbReference type="GO" id="GO:0007186">
    <property type="term" value="P:G protein-coupled receptor signaling pathway"/>
    <property type="evidence" value="ECO:0000318"/>
    <property type="project" value="GO_Central"/>
</dbReference>
<dbReference type="CDD" id="cd15155">
    <property type="entry name" value="7tmA_LPAR4"/>
    <property type="match status" value="1"/>
</dbReference>
<dbReference type="FunFam" id="1.20.1070.10:FF:000017">
    <property type="entry name" value="lysophosphatidic acid receptor 4"/>
    <property type="match status" value="1"/>
</dbReference>
<dbReference type="Gene3D" id="1.20.1070.10">
    <property type="entry name" value="Rhodopsin 7-helix transmembrane proteins"/>
    <property type="match status" value="1"/>
</dbReference>
<dbReference type="InterPro" id="IPR000276">
    <property type="entry name" value="GPCR_Rhodpsn"/>
</dbReference>
<dbReference type="InterPro" id="IPR017452">
    <property type="entry name" value="GPCR_Rhodpsn_7TM"/>
</dbReference>
<dbReference type="PANTHER" id="PTHR24232">
    <property type="entry name" value="G-PROTEIN COUPLED RECEPTOR"/>
    <property type="match status" value="1"/>
</dbReference>
<dbReference type="PANTHER" id="PTHR24232:SF41">
    <property type="entry name" value="LYSOPHOSPHATIDIC ACID RECEPTOR 4"/>
    <property type="match status" value="1"/>
</dbReference>
<dbReference type="Pfam" id="PF00001">
    <property type="entry name" value="7tm_1"/>
    <property type="match status" value="1"/>
</dbReference>
<dbReference type="PRINTS" id="PR00237">
    <property type="entry name" value="GPCRRHODOPSN"/>
</dbReference>
<dbReference type="PRINTS" id="PR01067">
    <property type="entry name" value="P2Y5ORPHANR"/>
</dbReference>
<dbReference type="SMART" id="SM01381">
    <property type="entry name" value="7TM_GPCR_Srsx"/>
    <property type="match status" value="1"/>
</dbReference>
<dbReference type="SUPFAM" id="SSF81321">
    <property type="entry name" value="Family A G protein-coupled receptor-like"/>
    <property type="match status" value="1"/>
</dbReference>
<dbReference type="PROSITE" id="PS00237">
    <property type="entry name" value="G_PROTEIN_RECEP_F1_1"/>
    <property type="match status" value="1"/>
</dbReference>
<dbReference type="PROSITE" id="PS50262">
    <property type="entry name" value="G_PROTEIN_RECEP_F1_2"/>
    <property type="match status" value="1"/>
</dbReference>
<feature type="chain" id="PRO_0000070033" description="Lysophosphatidic acid receptor 4">
    <location>
        <begin position="1"/>
        <end position="370"/>
    </location>
</feature>
<feature type="topological domain" description="Extracellular" evidence="1">
    <location>
        <begin position="1"/>
        <end position="43"/>
    </location>
</feature>
<feature type="transmembrane region" description="Helical; Name=1" evidence="1">
    <location>
        <begin position="44"/>
        <end position="64"/>
    </location>
</feature>
<feature type="topological domain" description="Cytoplasmic" evidence="1">
    <location>
        <begin position="65"/>
        <end position="73"/>
    </location>
</feature>
<feature type="transmembrane region" description="Helical; Name=2" evidence="1">
    <location>
        <begin position="74"/>
        <end position="94"/>
    </location>
</feature>
<feature type="topological domain" description="Extracellular" evidence="1">
    <location>
        <begin position="95"/>
        <end position="112"/>
    </location>
</feature>
<feature type="transmembrane region" description="Helical; Name=3" evidence="1">
    <location>
        <begin position="113"/>
        <end position="133"/>
    </location>
</feature>
<feature type="topological domain" description="Cytoplasmic" evidence="1">
    <location>
        <begin position="134"/>
        <end position="155"/>
    </location>
</feature>
<feature type="transmembrane region" description="Helical; Name=4" evidence="1">
    <location>
        <begin position="156"/>
        <end position="176"/>
    </location>
</feature>
<feature type="topological domain" description="Extracellular" evidence="1">
    <location>
        <begin position="177"/>
        <end position="203"/>
    </location>
</feature>
<feature type="transmembrane region" description="Helical; Name=5" evidence="1">
    <location>
        <begin position="204"/>
        <end position="224"/>
    </location>
</feature>
<feature type="topological domain" description="Cytoplasmic" evidence="1">
    <location>
        <begin position="225"/>
        <end position="254"/>
    </location>
</feature>
<feature type="transmembrane region" description="Helical; Name=6" evidence="1">
    <location>
        <begin position="255"/>
        <end position="275"/>
    </location>
</feature>
<feature type="topological domain" description="Extracellular" evidence="1">
    <location>
        <begin position="276"/>
        <end position="294"/>
    </location>
</feature>
<feature type="transmembrane region" description="Helical; Name=7" evidence="1">
    <location>
        <begin position="295"/>
        <end position="315"/>
    </location>
</feature>
<feature type="topological domain" description="Cytoplasmic" evidence="1">
    <location>
        <begin position="316"/>
        <end position="370"/>
    </location>
</feature>
<feature type="glycosylation site" description="N-linked (GlcNAc...) asparagine" evidence="1">
    <location>
        <position position="15"/>
    </location>
</feature>
<feature type="glycosylation site" description="N-linked (GlcNAc...) asparagine" evidence="1">
    <location>
        <position position="24"/>
    </location>
</feature>
<feature type="glycosylation site" description="N-linked (GlcNAc...) asparagine" evidence="1">
    <location>
        <position position="28"/>
    </location>
</feature>
<feature type="glycosylation site" description="N-linked (GlcNAc...) asparagine" evidence="4">
    <location>
        <position position="183"/>
    </location>
</feature>
<feature type="disulfide bond" evidence="2">
    <location>
        <begin position="111"/>
        <end position="188"/>
    </location>
</feature>
<feature type="sequence conflict" description="In Ref. 8; AAH69996." evidence="5" ref="8">
    <original>V</original>
    <variation>A</variation>
    <location>
        <position position="49"/>
    </location>
</feature>
<feature type="sequence conflict" description="In Ref. 3; AAB66322." evidence="5" ref="3">
    <original>F</original>
    <variation>L</variation>
    <location>
        <position position="192"/>
    </location>
</feature>
<feature type="sequence conflict" description="In Ref. 8; AAH95538." evidence="5" ref="8">
    <original>I</original>
    <variation>V</variation>
    <location>
        <position position="240"/>
    </location>
</feature>
<organism>
    <name type="scientific">Homo sapiens</name>
    <name type="common">Human</name>
    <dbReference type="NCBI Taxonomy" id="9606"/>
    <lineage>
        <taxon>Eukaryota</taxon>
        <taxon>Metazoa</taxon>
        <taxon>Chordata</taxon>
        <taxon>Craniata</taxon>
        <taxon>Vertebrata</taxon>
        <taxon>Euteleostomi</taxon>
        <taxon>Mammalia</taxon>
        <taxon>Eutheria</taxon>
        <taxon>Euarchontoglires</taxon>
        <taxon>Primates</taxon>
        <taxon>Haplorrhini</taxon>
        <taxon>Catarrhini</taxon>
        <taxon>Hominidae</taxon>
        <taxon>Homo</taxon>
    </lineage>
</organism>
<gene>
    <name type="primary">LPAR4</name>
    <name type="synonym">GPR23</name>
    <name type="synonym">LPA4</name>
    <name type="synonym">P2RY9</name>
</gene>
<sequence>MGDRRFIDFQFQDSNSSLRPRLGNATANNTCIVDDSFKYNLNGAVYSVVFILGLITNSVSLFVFCFRMKMRSETAIFITNLAVSDLLFVCTLPFKIFYNFNRHWPFGDTLCKISGTAFLTNIYGSMLFLTCISVDRFLAIVYPFRSRTIRTRRNSAIVCAGVWILVLSGGISASLFSTTNVNNATTTCFEGFSKRVWKTYLSKITIFIEVVGFIIPLILNVSCSSVVLRTLRKPATLSQIGTNKKKVLKMITVHMAVFVVCFVPYNSVLFLYALVRSQAITNCFLERFAKIMYPITLCLATLNCCFDPFIYYFTLESFQKSFYINAHIRMESLFKTETPLTTKPSLPAIQEEVSDQTTNNGGELMLESTF</sequence>